<proteinExistence type="inferred from homology"/>
<reference key="1">
    <citation type="journal article" date="2006" name="Infect. Immun.">
        <title>Acquisition of avian pathogenic Escherichia coli plasmids by a commensal E. coli isolate enhances its abilities to kill chicken embryos, grow in human urine, and colonize the murine kidney.</title>
        <authorList>
            <person name="Skyberg J.A."/>
            <person name="Johnson T.J."/>
            <person name="Johnson J.R."/>
            <person name="Clabots C."/>
            <person name="Logue C.M."/>
            <person name="Nolan L.K."/>
        </authorList>
    </citation>
    <scope>NUCLEOTIDE SEQUENCE [GENOMIC DNA]</scope>
    <source>
        <strain>A2363 / APEC</strain>
    </source>
</reference>
<evidence type="ECO:0000255" key="1">
    <source>
        <dbReference type="HAMAP-Rule" id="MF_01720"/>
    </source>
</evidence>
<comment type="function">
    <text evidence="1">Part of the tripartite efflux system MacAB-TolC. MacB is a non-canonical ABC transporter that contains transmembrane domains (TMD), which form a pore in the inner membrane, and an ATP-binding domain (NBD), which is responsible for energy generation. Confers resistance against macrolides.</text>
</comment>
<comment type="subunit">
    <text evidence="1">Homodimer. Part of the tripartite efflux system MacAB-TolC, which is composed of an inner membrane transporter, MacB, a periplasmic membrane fusion protein, MacA, and an outer membrane component, TolC. The complex forms a large protein conduit and can translocate molecules across both the inner and outer membranes. Interacts with MacA.</text>
</comment>
<comment type="subcellular location">
    <subcellularLocation>
        <location evidence="1">Cell inner membrane</location>
        <topology evidence="1">Multi-pass membrane protein</topology>
    </subcellularLocation>
</comment>
<comment type="similarity">
    <text evidence="1">Belongs to the ABC transporter superfamily. Macrolide exporter (TC 3.A.1.122) family.</text>
</comment>
<keyword id="KW-0046">Antibiotic resistance</keyword>
<keyword id="KW-0067">ATP-binding</keyword>
<keyword id="KW-0997">Cell inner membrane</keyword>
<keyword id="KW-1003">Cell membrane</keyword>
<keyword id="KW-0472">Membrane</keyword>
<keyword id="KW-0547">Nucleotide-binding</keyword>
<keyword id="KW-0614">Plasmid</keyword>
<keyword id="KW-1278">Translocase</keyword>
<keyword id="KW-0812">Transmembrane</keyword>
<keyword id="KW-1133">Transmembrane helix</keyword>
<keyword id="KW-0813">Transport</keyword>
<protein>
    <recommendedName>
        <fullName evidence="1">Macrolide export ATP-binding/permease protein MacB</fullName>
        <ecNumber evidence="1">7.6.2.-</ecNumber>
    </recommendedName>
</protein>
<name>MACB_ECOLX</name>
<dbReference type="EC" id="7.6.2.-" evidence="1"/>
<dbReference type="EMBL" id="AY545598">
    <property type="protein sequence ID" value="ABA54762.1"/>
    <property type="molecule type" value="Genomic_DNA"/>
</dbReference>
<dbReference type="RefSeq" id="WP_000733250.1">
    <property type="nucleotide sequence ID" value="NZ_WXYY01000004.1"/>
</dbReference>
<dbReference type="RefSeq" id="YP_001711875.1">
    <property type="nucleotide sequence ID" value="NC_010409.1"/>
</dbReference>
<dbReference type="RefSeq" id="YP_009071137.1">
    <property type="nucleotide sequence ID" value="NC_025179.1"/>
</dbReference>
<dbReference type="RefSeq" id="YP_444080.1">
    <property type="nucleotide sequence ID" value="NC_007675.1"/>
</dbReference>
<dbReference type="SMR" id="P0C2H2"/>
<dbReference type="GO" id="GO:0005886">
    <property type="term" value="C:plasma membrane"/>
    <property type="evidence" value="ECO:0007669"/>
    <property type="project" value="UniProtKB-SubCell"/>
</dbReference>
<dbReference type="GO" id="GO:0005524">
    <property type="term" value="F:ATP binding"/>
    <property type="evidence" value="ECO:0007669"/>
    <property type="project" value="UniProtKB-KW"/>
</dbReference>
<dbReference type="GO" id="GO:0016887">
    <property type="term" value="F:ATP hydrolysis activity"/>
    <property type="evidence" value="ECO:0007669"/>
    <property type="project" value="InterPro"/>
</dbReference>
<dbReference type="GO" id="GO:0022857">
    <property type="term" value="F:transmembrane transporter activity"/>
    <property type="evidence" value="ECO:0007669"/>
    <property type="project" value="TreeGrafter"/>
</dbReference>
<dbReference type="GO" id="GO:0046677">
    <property type="term" value="P:response to antibiotic"/>
    <property type="evidence" value="ECO:0007669"/>
    <property type="project" value="UniProtKB-KW"/>
</dbReference>
<dbReference type="CDD" id="cd03255">
    <property type="entry name" value="ABC_MJ0796_LolCDE_FtsE"/>
    <property type="match status" value="1"/>
</dbReference>
<dbReference type="FunFam" id="3.40.50.300:FF:000032">
    <property type="entry name" value="Export ABC transporter ATP-binding protein"/>
    <property type="match status" value="1"/>
</dbReference>
<dbReference type="Gene3D" id="3.40.50.300">
    <property type="entry name" value="P-loop containing nucleotide triphosphate hydrolases"/>
    <property type="match status" value="1"/>
</dbReference>
<dbReference type="InterPro" id="IPR003593">
    <property type="entry name" value="AAA+_ATPase"/>
</dbReference>
<dbReference type="InterPro" id="IPR003838">
    <property type="entry name" value="ABC3_permease_C"/>
</dbReference>
<dbReference type="InterPro" id="IPR003439">
    <property type="entry name" value="ABC_transporter-like_ATP-bd"/>
</dbReference>
<dbReference type="InterPro" id="IPR017871">
    <property type="entry name" value="ABC_transporter-like_CS"/>
</dbReference>
<dbReference type="InterPro" id="IPR017911">
    <property type="entry name" value="MacB-like_ATP-bd"/>
</dbReference>
<dbReference type="InterPro" id="IPR025857">
    <property type="entry name" value="MacB_PCD"/>
</dbReference>
<dbReference type="InterPro" id="IPR050250">
    <property type="entry name" value="Macrolide_Exporter_MacB"/>
</dbReference>
<dbReference type="InterPro" id="IPR027417">
    <property type="entry name" value="P-loop_NTPase"/>
</dbReference>
<dbReference type="PANTHER" id="PTHR30572:SF14">
    <property type="entry name" value="MACROLIDE EXPORT ATP-BINDING_PERMEASE PROTEIN MACB"/>
    <property type="match status" value="1"/>
</dbReference>
<dbReference type="PANTHER" id="PTHR30572">
    <property type="entry name" value="MEMBRANE COMPONENT OF TRANSPORTER-RELATED"/>
    <property type="match status" value="1"/>
</dbReference>
<dbReference type="Pfam" id="PF00005">
    <property type="entry name" value="ABC_tran"/>
    <property type="match status" value="1"/>
</dbReference>
<dbReference type="Pfam" id="PF02687">
    <property type="entry name" value="FtsX"/>
    <property type="match status" value="1"/>
</dbReference>
<dbReference type="Pfam" id="PF12704">
    <property type="entry name" value="MacB_PCD"/>
    <property type="match status" value="1"/>
</dbReference>
<dbReference type="SMART" id="SM00382">
    <property type="entry name" value="AAA"/>
    <property type="match status" value="1"/>
</dbReference>
<dbReference type="SUPFAM" id="SSF52540">
    <property type="entry name" value="P-loop containing nucleoside triphosphate hydrolases"/>
    <property type="match status" value="1"/>
</dbReference>
<dbReference type="PROSITE" id="PS00211">
    <property type="entry name" value="ABC_TRANSPORTER_1"/>
    <property type="match status" value="1"/>
</dbReference>
<dbReference type="PROSITE" id="PS50893">
    <property type="entry name" value="ABC_TRANSPORTER_2"/>
    <property type="match status" value="1"/>
</dbReference>
<dbReference type="PROSITE" id="PS51267">
    <property type="entry name" value="MACB"/>
    <property type="match status" value="1"/>
</dbReference>
<feature type="chain" id="PRO_0000269939" description="Macrolide export ATP-binding/permease protein MacB">
    <location>
        <begin position="1"/>
        <end position="646"/>
    </location>
</feature>
<feature type="transmembrane region" description="Helical" evidence="1">
    <location>
        <begin position="272"/>
        <end position="292"/>
    </location>
</feature>
<feature type="transmembrane region" description="Helical" evidence="1">
    <location>
        <begin position="518"/>
        <end position="538"/>
    </location>
</feature>
<feature type="transmembrane region" description="Helical" evidence="1">
    <location>
        <begin position="570"/>
        <end position="590"/>
    </location>
</feature>
<feature type="transmembrane region" description="Helical" evidence="1">
    <location>
        <begin position="611"/>
        <end position="631"/>
    </location>
</feature>
<feature type="domain" description="ABC transporter" evidence="1">
    <location>
        <begin position="5"/>
        <end position="243"/>
    </location>
</feature>
<feature type="binding site" evidence="1">
    <location>
        <begin position="41"/>
        <end position="48"/>
    </location>
    <ligand>
        <name>ATP</name>
        <dbReference type="ChEBI" id="CHEBI:30616"/>
    </ligand>
</feature>
<organism>
    <name type="scientific">Escherichia coli</name>
    <dbReference type="NCBI Taxonomy" id="562"/>
    <lineage>
        <taxon>Bacteria</taxon>
        <taxon>Pseudomonadati</taxon>
        <taxon>Pseudomonadota</taxon>
        <taxon>Gammaproteobacteria</taxon>
        <taxon>Enterobacterales</taxon>
        <taxon>Enterobacteriaceae</taxon>
        <taxon>Escherichia</taxon>
    </lineage>
</organism>
<geneLocation type="plasmid">
    <name>pAPEC-O2-ColV</name>
</geneLocation>
<accession>P0C2H2</accession>
<accession>Q3L7H3</accession>
<gene>
    <name evidence="1" type="primary">macB</name>
    <name type="synonym">etsB</name>
    <name type="ORF">O2ColV34</name>
</gene>
<sequence>MKKLIELKGVSRTYGNGDQTRTVLKNVDLTIVAGEMVAIIGASGSGKSTLMNIMGCLDVPNRGDYYIDGQNAACLSPDELARVRREHIGFIFQRYHLIPDLSALGNVEIPAIYANSERDSRRQRATALLGRLGLEGREHHKPCELSGGQQQRVSIARALINGGKIILADEPTGALDSQSGQEVLAILNELNRRGHTVVMVTHDMKVARHAKRIIELCDGEIIADSGGCVSATETLPKTNRIRQSYWKTLLDRTRESMQMALKAMKTHRLRTTLTMIGIVFGIASVVTVVALGEGARQETLEEIKSLGTNVVSIYPGQDLFDDSIESIRTLVPADANALAKQGFIDSVSPEVSASDNIRFLGKSAIASINGVGREHFRVKGIELLQGTTFRDDRNALQEVIIDENTRKAIFDNTGLQALGQIVFLGSVPARVVGIAKSNNRSDASNRITVWMPYSTVMYRIVGKPVLTGISVRLKDNVDNEAAISAISQLLTRRHGIKDFQLYNFEQIRKSIEHTSMTFSILILMVACISLMIGSIGVMNIMLISVTERTHEIGVRMAVGARRSDIMQQFIIEAVLVCLIGGALGIALSYITGALFNALADGIFAAIYSWQAAVAAFFCSTLIGIIFGYLPARKAARMDPVISLASE</sequence>